<accession>B9JR03</accession>
<name>PYRD_ALLAM</name>
<proteinExistence type="inferred from homology"/>
<feature type="chain" id="PRO_1000195059" description="Dihydroorotate dehydrogenase (quinone)">
    <location>
        <begin position="1"/>
        <end position="363"/>
    </location>
</feature>
<feature type="active site" description="Nucleophile" evidence="1">
    <location>
        <position position="174"/>
    </location>
</feature>
<feature type="binding site" evidence="1">
    <location>
        <begin position="62"/>
        <end position="66"/>
    </location>
    <ligand>
        <name>FMN</name>
        <dbReference type="ChEBI" id="CHEBI:58210"/>
    </ligand>
</feature>
<feature type="binding site" evidence="1">
    <location>
        <position position="66"/>
    </location>
    <ligand>
        <name>substrate</name>
    </ligand>
</feature>
<feature type="binding site" evidence="1">
    <location>
        <position position="86"/>
    </location>
    <ligand>
        <name>FMN</name>
        <dbReference type="ChEBI" id="CHEBI:58210"/>
    </ligand>
</feature>
<feature type="binding site" evidence="1">
    <location>
        <begin position="111"/>
        <end position="115"/>
    </location>
    <ligand>
        <name>substrate</name>
    </ligand>
</feature>
<feature type="binding site" evidence="1">
    <location>
        <position position="140"/>
    </location>
    <ligand>
        <name>FMN</name>
        <dbReference type="ChEBI" id="CHEBI:58210"/>
    </ligand>
</feature>
<feature type="binding site" evidence="1">
    <location>
        <position position="171"/>
    </location>
    <ligand>
        <name>FMN</name>
        <dbReference type="ChEBI" id="CHEBI:58210"/>
    </ligand>
</feature>
<feature type="binding site" evidence="1">
    <location>
        <position position="171"/>
    </location>
    <ligand>
        <name>substrate</name>
    </ligand>
</feature>
<feature type="binding site" evidence="1">
    <location>
        <position position="176"/>
    </location>
    <ligand>
        <name>substrate</name>
    </ligand>
</feature>
<feature type="binding site" evidence="1">
    <location>
        <position position="216"/>
    </location>
    <ligand>
        <name>FMN</name>
        <dbReference type="ChEBI" id="CHEBI:58210"/>
    </ligand>
</feature>
<feature type="binding site" evidence="1">
    <location>
        <position position="244"/>
    </location>
    <ligand>
        <name>FMN</name>
        <dbReference type="ChEBI" id="CHEBI:58210"/>
    </ligand>
</feature>
<feature type="binding site" evidence="1">
    <location>
        <begin position="245"/>
        <end position="246"/>
    </location>
    <ligand>
        <name>substrate</name>
    </ligand>
</feature>
<feature type="binding site" evidence="1">
    <location>
        <position position="267"/>
    </location>
    <ligand>
        <name>FMN</name>
        <dbReference type="ChEBI" id="CHEBI:58210"/>
    </ligand>
</feature>
<feature type="binding site" evidence="1">
    <location>
        <position position="296"/>
    </location>
    <ligand>
        <name>FMN</name>
        <dbReference type="ChEBI" id="CHEBI:58210"/>
    </ligand>
</feature>
<feature type="binding site" evidence="1">
    <location>
        <begin position="317"/>
        <end position="318"/>
    </location>
    <ligand>
        <name>FMN</name>
        <dbReference type="ChEBI" id="CHEBI:58210"/>
    </ligand>
</feature>
<gene>
    <name evidence="1" type="primary">pyrD</name>
    <name type="ordered locus">Avi_0586</name>
</gene>
<organism>
    <name type="scientific">Allorhizobium ampelinum (strain ATCC BAA-846 / DSM 112012 / S4)</name>
    <name type="common">Agrobacterium vitis (strain S4)</name>
    <dbReference type="NCBI Taxonomy" id="311402"/>
    <lineage>
        <taxon>Bacteria</taxon>
        <taxon>Pseudomonadati</taxon>
        <taxon>Pseudomonadota</taxon>
        <taxon>Alphaproteobacteria</taxon>
        <taxon>Hyphomicrobiales</taxon>
        <taxon>Rhizobiaceae</taxon>
        <taxon>Rhizobium/Agrobacterium group</taxon>
        <taxon>Allorhizobium</taxon>
        <taxon>Allorhizobium ampelinum</taxon>
    </lineage>
</organism>
<evidence type="ECO:0000255" key="1">
    <source>
        <dbReference type="HAMAP-Rule" id="MF_00225"/>
    </source>
</evidence>
<keyword id="KW-1003">Cell membrane</keyword>
<keyword id="KW-0285">Flavoprotein</keyword>
<keyword id="KW-0288">FMN</keyword>
<keyword id="KW-0472">Membrane</keyword>
<keyword id="KW-0560">Oxidoreductase</keyword>
<keyword id="KW-0665">Pyrimidine biosynthesis</keyword>
<keyword id="KW-1185">Reference proteome</keyword>
<comment type="function">
    <text evidence="1">Catalyzes the conversion of dihydroorotate to orotate with quinone as electron acceptor.</text>
</comment>
<comment type="catalytic activity">
    <reaction evidence="1">
        <text>(S)-dihydroorotate + a quinone = orotate + a quinol</text>
        <dbReference type="Rhea" id="RHEA:30187"/>
        <dbReference type="ChEBI" id="CHEBI:24646"/>
        <dbReference type="ChEBI" id="CHEBI:30839"/>
        <dbReference type="ChEBI" id="CHEBI:30864"/>
        <dbReference type="ChEBI" id="CHEBI:132124"/>
        <dbReference type="EC" id="1.3.5.2"/>
    </reaction>
</comment>
<comment type="cofactor">
    <cofactor evidence="1">
        <name>FMN</name>
        <dbReference type="ChEBI" id="CHEBI:58210"/>
    </cofactor>
    <text evidence="1">Binds 1 FMN per subunit.</text>
</comment>
<comment type="pathway">
    <text evidence="1">Pyrimidine metabolism; UMP biosynthesis via de novo pathway; orotate from (S)-dihydroorotate (quinone route): step 1/1.</text>
</comment>
<comment type="subunit">
    <text evidence="1">Monomer.</text>
</comment>
<comment type="subcellular location">
    <subcellularLocation>
        <location evidence="1">Cell membrane</location>
        <topology evidence="1">Peripheral membrane protein</topology>
    </subcellularLocation>
</comment>
<comment type="similarity">
    <text evidence="1">Belongs to the dihydroorotate dehydrogenase family. Type 2 subfamily.</text>
</comment>
<reference key="1">
    <citation type="journal article" date="2009" name="J. Bacteriol.">
        <title>Genome sequences of three Agrobacterium biovars help elucidate the evolution of multichromosome genomes in bacteria.</title>
        <authorList>
            <person name="Slater S.C."/>
            <person name="Goldman B.S."/>
            <person name="Goodner B."/>
            <person name="Setubal J.C."/>
            <person name="Farrand S.K."/>
            <person name="Nester E.W."/>
            <person name="Burr T.J."/>
            <person name="Banta L."/>
            <person name="Dickerman A.W."/>
            <person name="Paulsen I."/>
            <person name="Otten L."/>
            <person name="Suen G."/>
            <person name="Welch R."/>
            <person name="Almeida N.F."/>
            <person name="Arnold F."/>
            <person name="Burton O.T."/>
            <person name="Du Z."/>
            <person name="Ewing A."/>
            <person name="Godsy E."/>
            <person name="Heisel S."/>
            <person name="Houmiel K.L."/>
            <person name="Jhaveri J."/>
            <person name="Lu J."/>
            <person name="Miller N.M."/>
            <person name="Norton S."/>
            <person name="Chen Q."/>
            <person name="Phoolcharoen W."/>
            <person name="Ohlin V."/>
            <person name="Ondrusek D."/>
            <person name="Pride N."/>
            <person name="Stricklin S.L."/>
            <person name="Sun J."/>
            <person name="Wheeler C."/>
            <person name="Wilson L."/>
            <person name="Zhu H."/>
            <person name="Wood D.W."/>
        </authorList>
    </citation>
    <scope>NUCLEOTIDE SEQUENCE [LARGE SCALE GENOMIC DNA]</scope>
    <source>
        <strain>ATCC BAA-846 / DSM 112012 / S4</strain>
    </source>
</reference>
<dbReference type="EC" id="1.3.5.2" evidence="1"/>
<dbReference type="EMBL" id="CP000633">
    <property type="protein sequence ID" value="ACM35416.1"/>
    <property type="molecule type" value="Genomic_DNA"/>
</dbReference>
<dbReference type="RefSeq" id="WP_015914844.1">
    <property type="nucleotide sequence ID" value="NC_011989.1"/>
</dbReference>
<dbReference type="SMR" id="B9JR03"/>
<dbReference type="STRING" id="311402.Avi_0586"/>
<dbReference type="KEGG" id="avi:Avi_0586"/>
<dbReference type="eggNOG" id="COG0167">
    <property type="taxonomic scope" value="Bacteria"/>
</dbReference>
<dbReference type="HOGENOM" id="CLU_013640_2_1_5"/>
<dbReference type="UniPathway" id="UPA00070">
    <property type="reaction ID" value="UER00946"/>
</dbReference>
<dbReference type="Proteomes" id="UP000001596">
    <property type="component" value="Chromosome 1"/>
</dbReference>
<dbReference type="GO" id="GO:0005737">
    <property type="term" value="C:cytoplasm"/>
    <property type="evidence" value="ECO:0007669"/>
    <property type="project" value="InterPro"/>
</dbReference>
<dbReference type="GO" id="GO:0005886">
    <property type="term" value="C:plasma membrane"/>
    <property type="evidence" value="ECO:0007669"/>
    <property type="project" value="UniProtKB-SubCell"/>
</dbReference>
<dbReference type="GO" id="GO:0106430">
    <property type="term" value="F:dihydroorotate dehydrogenase (quinone) activity"/>
    <property type="evidence" value="ECO:0007669"/>
    <property type="project" value="UniProtKB-EC"/>
</dbReference>
<dbReference type="GO" id="GO:0006207">
    <property type="term" value="P:'de novo' pyrimidine nucleobase biosynthetic process"/>
    <property type="evidence" value="ECO:0007669"/>
    <property type="project" value="InterPro"/>
</dbReference>
<dbReference type="GO" id="GO:0044205">
    <property type="term" value="P:'de novo' UMP biosynthetic process"/>
    <property type="evidence" value="ECO:0007669"/>
    <property type="project" value="UniProtKB-UniRule"/>
</dbReference>
<dbReference type="CDD" id="cd04738">
    <property type="entry name" value="DHOD_2_like"/>
    <property type="match status" value="1"/>
</dbReference>
<dbReference type="Gene3D" id="3.20.20.70">
    <property type="entry name" value="Aldolase class I"/>
    <property type="match status" value="1"/>
</dbReference>
<dbReference type="HAMAP" id="MF_00225">
    <property type="entry name" value="DHO_dh_type2"/>
    <property type="match status" value="1"/>
</dbReference>
<dbReference type="InterPro" id="IPR013785">
    <property type="entry name" value="Aldolase_TIM"/>
</dbReference>
<dbReference type="InterPro" id="IPR050074">
    <property type="entry name" value="DHO_dehydrogenase"/>
</dbReference>
<dbReference type="InterPro" id="IPR005719">
    <property type="entry name" value="Dihydroorotate_DH_2"/>
</dbReference>
<dbReference type="InterPro" id="IPR005720">
    <property type="entry name" value="Dihydroorotate_DH_cat"/>
</dbReference>
<dbReference type="InterPro" id="IPR001295">
    <property type="entry name" value="Dihydroorotate_DH_CS"/>
</dbReference>
<dbReference type="NCBIfam" id="NF003645">
    <property type="entry name" value="PRK05286.1-2"/>
    <property type="match status" value="1"/>
</dbReference>
<dbReference type="NCBIfam" id="NF003652">
    <property type="entry name" value="PRK05286.2-5"/>
    <property type="match status" value="1"/>
</dbReference>
<dbReference type="NCBIfam" id="TIGR01036">
    <property type="entry name" value="pyrD_sub2"/>
    <property type="match status" value="1"/>
</dbReference>
<dbReference type="PANTHER" id="PTHR48109:SF4">
    <property type="entry name" value="DIHYDROOROTATE DEHYDROGENASE (QUINONE), MITOCHONDRIAL"/>
    <property type="match status" value="1"/>
</dbReference>
<dbReference type="PANTHER" id="PTHR48109">
    <property type="entry name" value="DIHYDROOROTATE DEHYDROGENASE (QUINONE), MITOCHONDRIAL-RELATED"/>
    <property type="match status" value="1"/>
</dbReference>
<dbReference type="Pfam" id="PF01180">
    <property type="entry name" value="DHO_dh"/>
    <property type="match status" value="1"/>
</dbReference>
<dbReference type="SUPFAM" id="SSF51395">
    <property type="entry name" value="FMN-linked oxidoreductases"/>
    <property type="match status" value="1"/>
</dbReference>
<dbReference type="PROSITE" id="PS00911">
    <property type="entry name" value="DHODEHASE_1"/>
    <property type="match status" value="1"/>
</dbReference>
<dbReference type="PROSITE" id="PS00912">
    <property type="entry name" value="DHODEHASE_2"/>
    <property type="match status" value="1"/>
</dbReference>
<protein>
    <recommendedName>
        <fullName evidence="1">Dihydroorotate dehydrogenase (quinone)</fullName>
        <ecNumber evidence="1">1.3.5.2</ecNumber>
    </recommendedName>
    <alternativeName>
        <fullName evidence="1">DHOdehase</fullName>
        <shortName evidence="1">DHOD</shortName>
        <shortName evidence="1">DHODase</shortName>
    </alternativeName>
    <alternativeName>
        <fullName evidence="1">Dihydroorotate oxidase</fullName>
    </alternativeName>
</protein>
<sequence>MIDPFKRFARPGLFLFDAETAHGLSIAGLKTSLMPKCHLPDDPRLAQTVAGLHFPNPLGMAAGYDKNAEVPDELLGLGFGFAEVGTLTPKPQGGNPKPRIFRLVRDEAVINRLGFNNQGHEAAFARLSARASRPGVVGINIGANKDAEDRIADYVTGIRRFYPLASYFTANISSPNTPGLRDLQAKDSLGHLLDAVLAARADEAAKAGRRVPVFLKIAPDLTEEGMDDIAEVVLARDLDGLIVSNTTLSRDGLTDTRQAGEAGGLSGKPLFEKSTAVLARMRHRVGSALPIIGVGGVSSAQTALEKIKAGADLVQLYSCMVYEGPGLPAAIVKGLSQALDRDGIASIAQLRDSRVDYWRALKV</sequence>